<accession>B5RAZ8</accession>
<evidence type="ECO:0000255" key="1">
    <source>
        <dbReference type="HAMAP-Rule" id="MF_01172"/>
    </source>
</evidence>
<organism>
    <name type="scientific">Salmonella gallinarum (strain 287/91 / NCTC 13346)</name>
    <dbReference type="NCBI Taxonomy" id="550538"/>
    <lineage>
        <taxon>Bacteria</taxon>
        <taxon>Pseudomonadati</taxon>
        <taxon>Pseudomonadota</taxon>
        <taxon>Gammaproteobacteria</taxon>
        <taxon>Enterobacterales</taxon>
        <taxon>Enterobacteriaceae</taxon>
        <taxon>Salmonella</taxon>
    </lineage>
</organism>
<comment type="function">
    <text evidence="1">Catalyzes the hydrolysis of N(2)-succinylarginine into N(2)-succinylornithine, ammonia and CO(2).</text>
</comment>
<comment type="catalytic activity">
    <reaction evidence="1">
        <text>N(2)-succinyl-L-arginine + 2 H2O + 2 H(+) = N(2)-succinyl-L-ornithine + 2 NH4(+) + CO2</text>
        <dbReference type="Rhea" id="RHEA:19533"/>
        <dbReference type="ChEBI" id="CHEBI:15377"/>
        <dbReference type="ChEBI" id="CHEBI:15378"/>
        <dbReference type="ChEBI" id="CHEBI:16526"/>
        <dbReference type="ChEBI" id="CHEBI:28938"/>
        <dbReference type="ChEBI" id="CHEBI:58241"/>
        <dbReference type="ChEBI" id="CHEBI:58514"/>
        <dbReference type="EC" id="3.5.3.23"/>
    </reaction>
</comment>
<comment type="pathway">
    <text evidence="1">Amino-acid degradation; L-arginine degradation via AST pathway; L-glutamate and succinate from L-arginine: step 2/5.</text>
</comment>
<comment type="subunit">
    <text evidence="1">Homodimer.</text>
</comment>
<comment type="similarity">
    <text evidence="1">Belongs to the succinylarginine dihydrolase family.</text>
</comment>
<protein>
    <recommendedName>
        <fullName evidence="1">N-succinylarginine dihydrolase</fullName>
        <ecNumber evidence="1">3.5.3.23</ecNumber>
    </recommendedName>
</protein>
<name>ASTB_SALG2</name>
<keyword id="KW-0056">Arginine metabolism</keyword>
<keyword id="KW-0378">Hydrolase</keyword>
<proteinExistence type="inferred from homology"/>
<sequence length="447" mass="49331">MTAHEVNFDGLVGLTHHYAGLSFGNEASTRHRFQVSNPRLAVKQGLLKMKALADAGFLQAVIPPHERPFIPALRQLGFTGSDEQILDKVARQAPRWLSRVSSASPMWVANAATVCPSADALDGKVHLTVANLNNKFHRALEAPVTEALLRAIFRDENQFSVHSALPQVALLGDEGAANHNRLGGEYGSAGVQLFVYGREEENEIRPARYPARQSREASEAVARLNQVNPQQVIFAQQNPEVIDQGVFHNDVIAVSNRQVLFCHEAAFARQKVLINQLRTRVDGFMAIEVPAEEVSVSDAVATYLFNSQLLSRDDGSMLLVLPRECQDHAGVWRYLNKLVAEDNPIIAIQVFDLRESMANGGGPACLRLRVVLTEEERRAVNPAVMMNDALFTALNAWADRYYRDRLTAADLADPLLLREGREALDVLTRLLDLGSVYPFQQTGAADG</sequence>
<dbReference type="EC" id="3.5.3.23" evidence="1"/>
<dbReference type="EMBL" id="AM933173">
    <property type="protein sequence ID" value="CAR37666.1"/>
    <property type="molecule type" value="Genomic_DNA"/>
</dbReference>
<dbReference type="RefSeq" id="WP_000123936.1">
    <property type="nucleotide sequence ID" value="NC_011274.1"/>
</dbReference>
<dbReference type="SMR" id="B5RAZ8"/>
<dbReference type="KEGG" id="seg:SG1810"/>
<dbReference type="HOGENOM" id="CLU_053835_0_0_6"/>
<dbReference type="UniPathway" id="UPA00185">
    <property type="reaction ID" value="UER00280"/>
</dbReference>
<dbReference type="Proteomes" id="UP000008321">
    <property type="component" value="Chromosome"/>
</dbReference>
<dbReference type="GO" id="GO:0009015">
    <property type="term" value="F:N-succinylarginine dihydrolase activity"/>
    <property type="evidence" value="ECO:0007669"/>
    <property type="project" value="UniProtKB-UniRule"/>
</dbReference>
<dbReference type="GO" id="GO:0019544">
    <property type="term" value="P:arginine catabolic process to glutamate"/>
    <property type="evidence" value="ECO:0007669"/>
    <property type="project" value="UniProtKB-UniRule"/>
</dbReference>
<dbReference type="GO" id="GO:0019545">
    <property type="term" value="P:arginine catabolic process to succinate"/>
    <property type="evidence" value="ECO:0007669"/>
    <property type="project" value="UniProtKB-UniRule"/>
</dbReference>
<dbReference type="FunFam" id="3.75.10.20:FF:000001">
    <property type="entry name" value="N-succinylarginine dihydrolase"/>
    <property type="match status" value="1"/>
</dbReference>
<dbReference type="Gene3D" id="3.75.10.20">
    <property type="entry name" value="Succinylarginine dihydrolase"/>
    <property type="match status" value="1"/>
</dbReference>
<dbReference type="HAMAP" id="MF_01172">
    <property type="entry name" value="AstB"/>
    <property type="match status" value="1"/>
</dbReference>
<dbReference type="InterPro" id="IPR037031">
    <property type="entry name" value="AstB_sf"/>
</dbReference>
<dbReference type="InterPro" id="IPR007079">
    <property type="entry name" value="SuccinylArg_d-Hdrlase_AstB"/>
</dbReference>
<dbReference type="NCBIfam" id="TIGR03241">
    <property type="entry name" value="arg_catab_astB"/>
    <property type="match status" value="1"/>
</dbReference>
<dbReference type="NCBIfam" id="NF009789">
    <property type="entry name" value="PRK13281.1"/>
    <property type="match status" value="1"/>
</dbReference>
<dbReference type="PANTHER" id="PTHR30420">
    <property type="entry name" value="N-SUCCINYLARGININE DIHYDROLASE"/>
    <property type="match status" value="1"/>
</dbReference>
<dbReference type="PANTHER" id="PTHR30420:SF2">
    <property type="entry name" value="N-SUCCINYLARGININE DIHYDROLASE"/>
    <property type="match status" value="1"/>
</dbReference>
<dbReference type="Pfam" id="PF04996">
    <property type="entry name" value="AstB"/>
    <property type="match status" value="1"/>
</dbReference>
<dbReference type="SUPFAM" id="SSF55909">
    <property type="entry name" value="Pentein"/>
    <property type="match status" value="1"/>
</dbReference>
<gene>
    <name evidence="1" type="primary">astB</name>
    <name type="ordered locus">SG1810</name>
</gene>
<feature type="chain" id="PRO_1000138024" description="N-succinylarginine dihydrolase">
    <location>
        <begin position="1"/>
        <end position="447"/>
    </location>
</feature>
<feature type="active site" evidence="1">
    <location>
        <position position="174"/>
    </location>
</feature>
<feature type="active site" evidence="1">
    <location>
        <position position="248"/>
    </location>
</feature>
<feature type="active site" description="Nucleophile" evidence="1">
    <location>
        <position position="365"/>
    </location>
</feature>
<feature type="binding site" evidence="1">
    <location>
        <begin position="19"/>
        <end position="28"/>
    </location>
    <ligand>
        <name>substrate</name>
    </ligand>
</feature>
<feature type="binding site" evidence="1">
    <location>
        <position position="110"/>
    </location>
    <ligand>
        <name>substrate</name>
    </ligand>
</feature>
<feature type="binding site" evidence="1">
    <location>
        <begin position="137"/>
        <end position="138"/>
    </location>
    <ligand>
        <name>substrate</name>
    </ligand>
</feature>
<feature type="binding site" evidence="1">
    <location>
        <position position="212"/>
    </location>
    <ligand>
        <name>substrate</name>
    </ligand>
</feature>
<feature type="binding site" evidence="1">
    <location>
        <position position="250"/>
    </location>
    <ligand>
        <name>substrate</name>
    </ligand>
</feature>
<feature type="binding site" evidence="1">
    <location>
        <position position="359"/>
    </location>
    <ligand>
        <name>substrate</name>
    </ligand>
</feature>
<reference key="1">
    <citation type="journal article" date="2008" name="Genome Res.">
        <title>Comparative genome analysis of Salmonella enteritidis PT4 and Salmonella gallinarum 287/91 provides insights into evolutionary and host adaptation pathways.</title>
        <authorList>
            <person name="Thomson N.R."/>
            <person name="Clayton D.J."/>
            <person name="Windhorst D."/>
            <person name="Vernikos G."/>
            <person name="Davidson S."/>
            <person name="Churcher C."/>
            <person name="Quail M.A."/>
            <person name="Stevens M."/>
            <person name="Jones M.A."/>
            <person name="Watson M."/>
            <person name="Barron A."/>
            <person name="Layton A."/>
            <person name="Pickard D."/>
            <person name="Kingsley R.A."/>
            <person name="Bignell A."/>
            <person name="Clark L."/>
            <person name="Harris B."/>
            <person name="Ormond D."/>
            <person name="Abdellah Z."/>
            <person name="Brooks K."/>
            <person name="Cherevach I."/>
            <person name="Chillingworth T."/>
            <person name="Woodward J."/>
            <person name="Norberczak H."/>
            <person name="Lord A."/>
            <person name="Arrowsmith C."/>
            <person name="Jagels K."/>
            <person name="Moule S."/>
            <person name="Mungall K."/>
            <person name="Saunders M."/>
            <person name="Whitehead S."/>
            <person name="Chabalgoity J.A."/>
            <person name="Maskell D."/>
            <person name="Humphreys T."/>
            <person name="Roberts M."/>
            <person name="Barrow P.A."/>
            <person name="Dougan G."/>
            <person name="Parkhill J."/>
        </authorList>
    </citation>
    <scope>NUCLEOTIDE SEQUENCE [LARGE SCALE GENOMIC DNA]</scope>
    <source>
        <strain>287/91 / NCTC 13346</strain>
    </source>
</reference>